<accession>B7ND45</accession>
<proteinExistence type="inferred from homology"/>
<feature type="chain" id="PRO_1000140035" description="Multifunctional CCA protein">
    <location>
        <begin position="1"/>
        <end position="412"/>
    </location>
</feature>
<feature type="domain" description="HD" evidence="1">
    <location>
        <begin position="228"/>
        <end position="329"/>
    </location>
</feature>
<feature type="binding site" evidence="1">
    <location>
        <position position="8"/>
    </location>
    <ligand>
        <name>ATP</name>
        <dbReference type="ChEBI" id="CHEBI:30616"/>
    </ligand>
</feature>
<feature type="binding site" evidence="1">
    <location>
        <position position="8"/>
    </location>
    <ligand>
        <name>CTP</name>
        <dbReference type="ChEBI" id="CHEBI:37563"/>
    </ligand>
</feature>
<feature type="binding site" evidence="1">
    <location>
        <position position="11"/>
    </location>
    <ligand>
        <name>ATP</name>
        <dbReference type="ChEBI" id="CHEBI:30616"/>
    </ligand>
</feature>
<feature type="binding site" evidence="1">
    <location>
        <position position="11"/>
    </location>
    <ligand>
        <name>CTP</name>
        <dbReference type="ChEBI" id="CHEBI:37563"/>
    </ligand>
</feature>
<feature type="binding site" evidence="1">
    <location>
        <position position="21"/>
    </location>
    <ligand>
        <name>Mg(2+)</name>
        <dbReference type="ChEBI" id="CHEBI:18420"/>
    </ligand>
</feature>
<feature type="binding site" evidence="1">
    <location>
        <position position="23"/>
    </location>
    <ligand>
        <name>Mg(2+)</name>
        <dbReference type="ChEBI" id="CHEBI:18420"/>
    </ligand>
</feature>
<feature type="binding site" evidence="1">
    <location>
        <position position="91"/>
    </location>
    <ligand>
        <name>ATP</name>
        <dbReference type="ChEBI" id="CHEBI:30616"/>
    </ligand>
</feature>
<feature type="binding site" evidence="1">
    <location>
        <position position="91"/>
    </location>
    <ligand>
        <name>CTP</name>
        <dbReference type="ChEBI" id="CHEBI:37563"/>
    </ligand>
</feature>
<feature type="binding site" evidence="1">
    <location>
        <position position="137"/>
    </location>
    <ligand>
        <name>ATP</name>
        <dbReference type="ChEBI" id="CHEBI:30616"/>
    </ligand>
</feature>
<feature type="binding site" evidence="1">
    <location>
        <position position="137"/>
    </location>
    <ligand>
        <name>CTP</name>
        <dbReference type="ChEBI" id="CHEBI:37563"/>
    </ligand>
</feature>
<feature type="binding site" evidence="1">
    <location>
        <position position="140"/>
    </location>
    <ligand>
        <name>ATP</name>
        <dbReference type="ChEBI" id="CHEBI:30616"/>
    </ligand>
</feature>
<feature type="binding site" evidence="1">
    <location>
        <position position="140"/>
    </location>
    <ligand>
        <name>CTP</name>
        <dbReference type="ChEBI" id="CHEBI:37563"/>
    </ligand>
</feature>
<reference key="1">
    <citation type="journal article" date="2009" name="PLoS Genet.">
        <title>Organised genome dynamics in the Escherichia coli species results in highly diverse adaptive paths.</title>
        <authorList>
            <person name="Touchon M."/>
            <person name="Hoede C."/>
            <person name="Tenaillon O."/>
            <person name="Barbe V."/>
            <person name="Baeriswyl S."/>
            <person name="Bidet P."/>
            <person name="Bingen E."/>
            <person name="Bonacorsi S."/>
            <person name="Bouchier C."/>
            <person name="Bouvet O."/>
            <person name="Calteau A."/>
            <person name="Chiapello H."/>
            <person name="Clermont O."/>
            <person name="Cruveiller S."/>
            <person name="Danchin A."/>
            <person name="Diard M."/>
            <person name="Dossat C."/>
            <person name="Karoui M.E."/>
            <person name="Frapy E."/>
            <person name="Garry L."/>
            <person name="Ghigo J.M."/>
            <person name="Gilles A.M."/>
            <person name="Johnson J."/>
            <person name="Le Bouguenec C."/>
            <person name="Lescat M."/>
            <person name="Mangenot S."/>
            <person name="Martinez-Jehanne V."/>
            <person name="Matic I."/>
            <person name="Nassif X."/>
            <person name="Oztas S."/>
            <person name="Petit M.A."/>
            <person name="Pichon C."/>
            <person name="Rouy Z."/>
            <person name="Ruf C.S."/>
            <person name="Schneider D."/>
            <person name="Tourret J."/>
            <person name="Vacherie B."/>
            <person name="Vallenet D."/>
            <person name="Medigue C."/>
            <person name="Rocha E.P.C."/>
            <person name="Denamur E."/>
        </authorList>
    </citation>
    <scope>NUCLEOTIDE SEQUENCE [LARGE SCALE GENOMIC DNA]</scope>
    <source>
        <strain>UMN026 / ExPEC</strain>
    </source>
</reference>
<keyword id="KW-0067">ATP-binding</keyword>
<keyword id="KW-0378">Hydrolase</keyword>
<keyword id="KW-0460">Magnesium</keyword>
<keyword id="KW-0479">Metal-binding</keyword>
<keyword id="KW-0511">Multifunctional enzyme</keyword>
<keyword id="KW-0533">Nickel</keyword>
<keyword id="KW-0547">Nucleotide-binding</keyword>
<keyword id="KW-0548">Nucleotidyltransferase</keyword>
<keyword id="KW-0692">RNA repair</keyword>
<keyword id="KW-0694">RNA-binding</keyword>
<keyword id="KW-0808">Transferase</keyword>
<keyword id="KW-0819">tRNA processing</keyword>
<evidence type="ECO:0000255" key="1">
    <source>
        <dbReference type="HAMAP-Rule" id="MF_01261"/>
    </source>
</evidence>
<protein>
    <recommendedName>
        <fullName evidence="1">Multifunctional CCA protein</fullName>
    </recommendedName>
    <domain>
        <recommendedName>
            <fullName evidence="1">CCA-adding enzyme</fullName>
            <ecNumber evidence="1">2.7.7.72</ecNumber>
        </recommendedName>
        <alternativeName>
            <fullName evidence="1">CCA tRNA nucleotidyltransferase</fullName>
        </alternativeName>
        <alternativeName>
            <fullName evidence="1">tRNA CCA-pyrophosphorylase</fullName>
        </alternativeName>
        <alternativeName>
            <fullName evidence="1">tRNA adenylyl-/cytidylyl-transferase</fullName>
        </alternativeName>
        <alternativeName>
            <fullName evidence="1">tRNA nucleotidyltransferase</fullName>
        </alternativeName>
        <alternativeName>
            <fullName evidence="1">tRNA-NT</fullName>
        </alternativeName>
    </domain>
    <domain>
        <recommendedName>
            <fullName evidence="1">2'-nucleotidase</fullName>
            <ecNumber evidence="1">3.1.3.-</ecNumber>
        </recommendedName>
    </domain>
    <domain>
        <recommendedName>
            <fullName evidence="1">2',3'-cyclic phosphodiesterase</fullName>
            <ecNumber evidence="1">3.1.4.-</ecNumber>
        </recommendedName>
    </domain>
    <domain>
        <recommendedName>
            <fullName evidence="1">Phosphatase</fullName>
            <ecNumber evidence="1">3.1.3.-</ecNumber>
        </recommendedName>
    </domain>
</protein>
<dbReference type="EC" id="2.7.7.72" evidence="1"/>
<dbReference type="EC" id="3.1.3.-" evidence="1"/>
<dbReference type="EC" id="3.1.4.-" evidence="1"/>
<dbReference type="EMBL" id="CU928163">
    <property type="protein sequence ID" value="CAR14695.1"/>
    <property type="molecule type" value="Genomic_DNA"/>
</dbReference>
<dbReference type="RefSeq" id="WP_000708487.1">
    <property type="nucleotide sequence ID" value="NC_011751.1"/>
</dbReference>
<dbReference type="RefSeq" id="YP_002414200.1">
    <property type="nucleotide sequence ID" value="NC_011751.1"/>
</dbReference>
<dbReference type="SMR" id="B7ND45"/>
<dbReference type="STRING" id="585056.ECUMN_3539"/>
<dbReference type="KEGG" id="eum:ECUMN_3539"/>
<dbReference type="PATRIC" id="fig|585056.7.peg.3713"/>
<dbReference type="HOGENOM" id="CLU_015961_1_1_6"/>
<dbReference type="Proteomes" id="UP000007097">
    <property type="component" value="Chromosome"/>
</dbReference>
<dbReference type="GO" id="GO:0005524">
    <property type="term" value="F:ATP binding"/>
    <property type="evidence" value="ECO:0007669"/>
    <property type="project" value="UniProtKB-UniRule"/>
</dbReference>
<dbReference type="GO" id="GO:0004810">
    <property type="term" value="F:CCA tRNA nucleotidyltransferase activity"/>
    <property type="evidence" value="ECO:0007669"/>
    <property type="project" value="UniProtKB-UniRule"/>
</dbReference>
<dbReference type="GO" id="GO:0004112">
    <property type="term" value="F:cyclic-nucleotide phosphodiesterase activity"/>
    <property type="evidence" value="ECO:0007669"/>
    <property type="project" value="UniProtKB-UniRule"/>
</dbReference>
<dbReference type="GO" id="GO:0000287">
    <property type="term" value="F:magnesium ion binding"/>
    <property type="evidence" value="ECO:0007669"/>
    <property type="project" value="UniProtKB-UniRule"/>
</dbReference>
<dbReference type="GO" id="GO:0016791">
    <property type="term" value="F:phosphatase activity"/>
    <property type="evidence" value="ECO:0007669"/>
    <property type="project" value="UniProtKB-UniRule"/>
</dbReference>
<dbReference type="GO" id="GO:0000049">
    <property type="term" value="F:tRNA binding"/>
    <property type="evidence" value="ECO:0007669"/>
    <property type="project" value="UniProtKB-UniRule"/>
</dbReference>
<dbReference type="GO" id="GO:0042245">
    <property type="term" value="P:RNA repair"/>
    <property type="evidence" value="ECO:0007669"/>
    <property type="project" value="UniProtKB-KW"/>
</dbReference>
<dbReference type="GO" id="GO:0001680">
    <property type="term" value="P:tRNA 3'-terminal CCA addition"/>
    <property type="evidence" value="ECO:0007669"/>
    <property type="project" value="UniProtKB-UniRule"/>
</dbReference>
<dbReference type="CDD" id="cd00077">
    <property type="entry name" value="HDc"/>
    <property type="match status" value="1"/>
</dbReference>
<dbReference type="CDD" id="cd05398">
    <property type="entry name" value="NT_ClassII-CCAase"/>
    <property type="match status" value="1"/>
</dbReference>
<dbReference type="FunFam" id="1.10.3090.10:FF:000001">
    <property type="entry name" value="Multifunctional CCA protein"/>
    <property type="match status" value="1"/>
</dbReference>
<dbReference type="FunFam" id="3.30.460.10:FF:000016">
    <property type="entry name" value="Multifunctional CCA protein"/>
    <property type="match status" value="1"/>
</dbReference>
<dbReference type="Gene3D" id="3.30.460.10">
    <property type="entry name" value="Beta Polymerase, domain 2"/>
    <property type="match status" value="1"/>
</dbReference>
<dbReference type="Gene3D" id="1.10.3090.10">
    <property type="entry name" value="cca-adding enzyme, domain 2"/>
    <property type="match status" value="1"/>
</dbReference>
<dbReference type="HAMAP" id="MF_01261">
    <property type="entry name" value="CCA_bact_type1"/>
    <property type="match status" value="1"/>
</dbReference>
<dbReference type="HAMAP" id="MF_01262">
    <property type="entry name" value="CCA_bact_type2"/>
    <property type="match status" value="1"/>
</dbReference>
<dbReference type="InterPro" id="IPR012006">
    <property type="entry name" value="CCA_bact"/>
</dbReference>
<dbReference type="InterPro" id="IPR003607">
    <property type="entry name" value="HD/PDEase_dom"/>
</dbReference>
<dbReference type="InterPro" id="IPR006674">
    <property type="entry name" value="HD_domain"/>
</dbReference>
<dbReference type="InterPro" id="IPR043519">
    <property type="entry name" value="NT_sf"/>
</dbReference>
<dbReference type="InterPro" id="IPR002646">
    <property type="entry name" value="PolA_pol_head_dom"/>
</dbReference>
<dbReference type="InterPro" id="IPR032828">
    <property type="entry name" value="PolyA_RNA-bd"/>
</dbReference>
<dbReference type="InterPro" id="IPR050124">
    <property type="entry name" value="tRNA_CCA-adding_enzyme"/>
</dbReference>
<dbReference type="NCBIfam" id="NF008137">
    <property type="entry name" value="PRK10885.1"/>
    <property type="match status" value="1"/>
</dbReference>
<dbReference type="PANTHER" id="PTHR47545">
    <property type="entry name" value="MULTIFUNCTIONAL CCA PROTEIN"/>
    <property type="match status" value="1"/>
</dbReference>
<dbReference type="PANTHER" id="PTHR47545:SF1">
    <property type="entry name" value="MULTIFUNCTIONAL CCA PROTEIN"/>
    <property type="match status" value="1"/>
</dbReference>
<dbReference type="Pfam" id="PF01966">
    <property type="entry name" value="HD"/>
    <property type="match status" value="1"/>
</dbReference>
<dbReference type="Pfam" id="PF01743">
    <property type="entry name" value="PolyA_pol"/>
    <property type="match status" value="1"/>
</dbReference>
<dbReference type="Pfam" id="PF12627">
    <property type="entry name" value="PolyA_pol_RNAbd"/>
    <property type="match status" value="1"/>
</dbReference>
<dbReference type="PIRSF" id="PIRSF000813">
    <property type="entry name" value="CCA_bact"/>
    <property type="match status" value="1"/>
</dbReference>
<dbReference type="SUPFAM" id="SSF81301">
    <property type="entry name" value="Nucleotidyltransferase"/>
    <property type="match status" value="1"/>
</dbReference>
<dbReference type="SUPFAM" id="SSF81891">
    <property type="entry name" value="Poly A polymerase C-terminal region-like"/>
    <property type="match status" value="1"/>
</dbReference>
<dbReference type="PROSITE" id="PS51831">
    <property type="entry name" value="HD"/>
    <property type="match status" value="1"/>
</dbReference>
<comment type="function">
    <text evidence="1">Catalyzes the addition and repair of the essential 3'-terminal CCA sequence in tRNAs without using a nucleic acid template. Adds these three nucleotides in the order of C, C, and A to the tRNA nucleotide-73, using CTP and ATP as substrates and producing inorganic pyrophosphate. tRNA 3'-terminal CCA addition is required both for tRNA processing and repair. Also involved in tRNA surveillance by mediating tandem CCA addition to generate a CCACCA at the 3' terminus of unstable tRNAs. While stable tRNAs receive only 3'-terminal CCA, unstable tRNAs are marked with CCACCA and rapidly degraded.</text>
</comment>
<comment type="catalytic activity">
    <reaction evidence="1">
        <text>a tRNA precursor + 2 CTP + ATP = a tRNA with a 3' CCA end + 3 diphosphate</text>
        <dbReference type="Rhea" id="RHEA:14433"/>
        <dbReference type="Rhea" id="RHEA-COMP:10465"/>
        <dbReference type="Rhea" id="RHEA-COMP:10468"/>
        <dbReference type="ChEBI" id="CHEBI:30616"/>
        <dbReference type="ChEBI" id="CHEBI:33019"/>
        <dbReference type="ChEBI" id="CHEBI:37563"/>
        <dbReference type="ChEBI" id="CHEBI:74896"/>
        <dbReference type="ChEBI" id="CHEBI:83071"/>
        <dbReference type="EC" id="2.7.7.72"/>
    </reaction>
</comment>
<comment type="catalytic activity">
    <reaction evidence="1">
        <text>a tRNA with a 3' CCA end + 2 CTP + ATP = a tRNA with a 3' CCACCA end + 3 diphosphate</text>
        <dbReference type="Rhea" id="RHEA:76235"/>
        <dbReference type="Rhea" id="RHEA-COMP:10468"/>
        <dbReference type="Rhea" id="RHEA-COMP:18655"/>
        <dbReference type="ChEBI" id="CHEBI:30616"/>
        <dbReference type="ChEBI" id="CHEBI:33019"/>
        <dbReference type="ChEBI" id="CHEBI:37563"/>
        <dbReference type="ChEBI" id="CHEBI:83071"/>
        <dbReference type="ChEBI" id="CHEBI:195187"/>
    </reaction>
    <physiologicalReaction direction="left-to-right" evidence="1">
        <dbReference type="Rhea" id="RHEA:76236"/>
    </physiologicalReaction>
</comment>
<comment type="cofactor">
    <cofactor evidence="1">
        <name>Mg(2+)</name>
        <dbReference type="ChEBI" id="CHEBI:18420"/>
    </cofactor>
    <text evidence="1">Magnesium is required for nucleotidyltransferase activity.</text>
</comment>
<comment type="cofactor">
    <cofactor evidence="1">
        <name>Ni(2+)</name>
        <dbReference type="ChEBI" id="CHEBI:49786"/>
    </cofactor>
    <text evidence="1">Nickel for phosphatase activity.</text>
</comment>
<comment type="subunit">
    <text evidence="1">Monomer. Can also form homodimers and oligomers.</text>
</comment>
<comment type="domain">
    <text evidence="1">Comprises two domains: an N-terminal domain containing the nucleotidyltransferase activity and a C-terminal HD domain associated with both phosphodiesterase and phosphatase activities.</text>
</comment>
<comment type="miscellaneous">
    <text evidence="1">A single active site specifically recognizes both ATP and CTP and is responsible for their addition.</text>
</comment>
<comment type="similarity">
    <text evidence="1">Belongs to the tRNA nucleotidyltransferase/poly(A) polymerase family. Bacterial CCA-adding enzyme type 1 subfamily.</text>
</comment>
<name>CCA_ECOLU</name>
<gene>
    <name evidence="1" type="primary">cca</name>
    <name type="ordered locus">ECUMN_3539</name>
</gene>
<organism>
    <name type="scientific">Escherichia coli O17:K52:H18 (strain UMN026 / ExPEC)</name>
    <dbReference type="NCBI Taxonomy" id="585056"/>
    <lineage>
        <taxon>Bacteria</taxon>
        <taxon>Pseudomonadati</taxon>
        <taxon>Pseudomonadota</taxon>
        <taxon>Gammaproteobacteria</taxon>
        <taxon>Enterobacterales</taxon>
        <taxon>Enterobacteriaceae</taxon>
        <taxon>Escherichia</taxon>
    </lineage>
</organism>
<sequence>MKIYLVGGAVRDALLGLPVKDRDWVVVGSTPQEMLDAGYQQVGRDFPVFLHPQTHEEYALARTERKSGSGYTGFTCYAAPDVTLEDDLKRRDLTINALAQDDNGEIIDPYNGLGDLQNRLLRHVSPAFGEDPLRVLRVARFAARYAHLGFRIADETLALMREMTHAGELEHLTPERVWKETESALTTRNPQVFFQVLRDCGALRVLFPEIDALFGVPAPAKWHPEIDTGIHTLMTLSMAAMLSPQVDVRFATLCHDLGKGLTPPELWPRHHGHGPAGVKLVEQLCQRLRVPNEIRDLARLVAEFHDLIHTFPMLNPKTIVKLFDSIDAWRKPQRVEQLALTSEADVRGRTGFESADYPQGRWLREAWEVAQSVPTKAVVEAGFKGVEIREELTRRRIAAVASWKEQRCPKPE</sequence>